<gene>
    <name type="primary">Ccdc177</name>
    <name type="synonym">Gm1568</name>
</gene>
<dbReference type="EMBL" id="AK147473">
    <property type="protein sequence ID" value="BAE27939.1"/>
    <property type="molecule type" value="mRNA"/>
</dbReference>
<dbReference type="EMBL" id="AC134537">
    <property type="status" value="NOT_ANNOTATED_CDS"/>
    <property type="molecule type" value="Genomic_DNA"/>
</dbReference>
<dbReference type="EMBL" id="BC067044">
    <property type="protein sequence ID" value="AAH67044.1"/>
    <property type="molecule type" value="mRNA"/>
</dbReference>
<dbReference type="CCDS" id="CCDS26015.1"/>
<dbReference type="RefSeq" id="NP_001008423.2">
    <property type="nucleotide sequence ID" value="NM_001008423.2"/>
</dbReference>
<dbReference type="SMR" id="Q3UHB8"/>
<dbReference type="BioGRID" id="237639">
    <property type="interactions" value="4"/>
</dbReference>
<dbReference type="FunCoup" id="Q3UHB8">
    <property type="interactions" value="84"/>
</dbReference>
<dbReference type="IntAct" id="Q3UHB8">
    <property type="interactions" value="2"/>
</dbReference>
<dbReference type="MINT" id="Q3UHB8"/>
<dbReference type="STRING" id="10090.ENSMUSP00000072982"/>
<dbReference type="iPTMnet" id="Q3UHB8"/>
<dbReference type="PhosphoSitePlus" id="Q3UHB8"/>
<dbReference type="SwissPalm" id="Q3UHB8"/>
<dbReference type="jPOST" id="Q3UHB8"/>
<dbReference type="PaxDb" id="10090-ENSMUSP00000072982"/>
<dbReference type="PeptideAtlas" id="Q3UHB8"/>
<dbReference type="ProteomicsDB" id="265295"/>
<dbReference type="DNASU" id="380768"/>
<dbReference type="Ensembl" id="ENSMUST00000073251.8">
    <property type="protein sequence ID" value="ENSMUSP00000072982.7"/>
    <property type="gene ID" value="ENSMUSG00000062961.8"/>
</dbReference>
<dbReference type="GeneID" id="380768"/>
<dbReference type="KEGG" id="mmu:380768"/>
<dbReference type="UCSC" id="uc007obh.2">
    <property type="organism name" value="mouse"/>
</dbReference>
<dbReference type="AGR" id="MGI:2686414"/>
<dbReference type="CTD" id="56936"/>
<dbReference type="MGI" id="MGI:2686414">
    <property type="gene designation" value="Ccdc177"/>
</dbReference>
<dbReference type="VEuPathDB" id="HostDB:ENSMUSG00000062961"/>
<dbReference type="eggNOG" id="ENOG502QVGE">
    <property type="taxonomic scope" value="Eukaryota"/>
</dbReference>
<dbReference type="GeneTree" id="ENSGT00740000115643"/>
<dbReference type="HOGENOM" id="CLU_017921_0_0_1"/>
<dbReference type="InParanoid" id="Q3UHB8"/>
<dbReference type="OMA" id="GPFSQHN"/>
<dbReference type="OrthoDB" id="200110at2759"/>
<dbReference type="PhylomeDB" id="Q3UHB8"/>
<dbReference type="TreeFam" id="TF344191"/>
<dbReference type="BioGRID-ORCS" id="380768">
    <property type="hits" value="6 hits in 77 CRISPR screens"/>
</dbReference>
<dbReference type="CD-CODE" id="CE726F99">
    <property type="entry name" value="Postsynaptic density"/>
</dbReference>
<dbReference type="ChiTaRS" id="Ccdc177">
    <property type="organism name" value="mouse"/>
</dbReference>
<dbReference type="PRO" id="PR:Q3UHB8"/>
<dbReference type="Proteomes" id="UP000000589">
    <property type="component" value="Chromosome 12"/>
</dbReference>
<dbReference type="RNAct" id="Q3UHB8">
    <property type="molecule type" value="protein"/>
</dbReference>
<dbReference type="Bgee" id="ENSMUSG00000062961">
    <property type="expression patterns" value="Expressed in rostral migratory stream and 129 other cell types or tissues"/>
</dbReference>
<dbReference type="InterPro" id="IPR029090">
    <property type="entry name" value="DUF4659"/>
</dbReference>
<dbReference type="PANTHER" id="PTHR33663">
    <property type="entry name" value="COILED-COIL DOMAIN-CONTAINING PROTEIN 177"/>
    <property type="match status" value="1"/>
</dbReference>
<dbReference type="PANTHER" id="PTHR33663:SF1">
    <property type="entry name" value="COILED-COIL DOMAIN-CONTAINING PROTEIN 177"/>
    <property type="match status" value="1"/>
</dbReference>
<dbReference type="Pfam" id="PF15558">
    <property type="entry name" value="DUF4659"/>
    <property type="match status" value="1"/>
</dbReference>
<reference key="1">
    <citation type="journal article" date="2005" name="Science">
        <title>The transcriptional landscape of the mammalian genome.</title>
        <authorList>
            <person name="Carninci P."/>
            <person name="Kasukawa T."/>
            <person name="Katayama S."/>
            <person name="Gough J."/>
            <person name="Frith M.C."/>
            <person name="Maeda N."/>
            <person name="Oyama R."/>
            <person name="Ravasi T."/>
            <person name="Lenhard B."/>
            <person name="Wells C."/>
            <person name="Kodzius R."/>
            <person name="Shimokawa K."/>
            <person name="Bajic V.B."/>
            <person name="Brenner S.E."/>
            <person name="Batalov S."/>
            <person name="Forrest A.R."/>
            <person name="Zavolan M."/>
            <person name="Davis M.J."/>
            <person name="Wilming L.G."/>
            <person name="Aidinis V."/>
            <person name="Allen J.E."/>
            <person name="Ambesi-Impiombato A."/>
            <person name="Apweiler R."/>
            <person name="Aturaliya R.N."/>
            <person name="Bailey T.L."/>
            <person name="Bansal M."/>
            <person name="Baxter L."/>
            <person name="Beisel K.W."/>
            <person name="Bersano T."/>
            <person name="Bono H."/>
            <person name="Chalk A.M."/>
            <person name="Chiu K.P."/>
            <person name="Choudhary V."/>
            <person name="Christoffels A."/>
            <person name="Clutterbuck D.R."/>
            <person name="Crowe M.L."/>
            <person name="Dalla E."/>
            <person name="Dalrymple B.P."/>
            <person name="de Bono B."/>
            <person name="Della Gatta G."/>
            <person name="di Bernardo D."/>
            <person name="Down T."/>
            <person name="Engstrom P."/>
            <person name="Fagiolini M."/>
            <person name="Faulkner G."/>
            <person name="Fletcher C.F."/>
            <person name="Fukushima T."/>
            <person name="Furuno M."/>
            <person name="Futaki S."/>
            <person name="Gariboldi M."/>
            <person name="Georgii-Hemming P."/>
            <person name="Gingeras T.R."/>
            <person name="Gojobori T."/>
            <person name="Green R.E."/>
            <person name="Gustincich S."/>
            <person name="Harbers M."/>
            <person name="Hayashi Y."/>
            <person name="Hensch T.K."/>
            <person name="Hirokawa N."/>
            <person name="Hill D."/>
            <person name="Huminiecki L."/>
            <person name="Iacono M."/>
            <person name="Ikeo K."/>
            <person name="Iwama A."/>
            <person name="Ishikawa T."/>
            <person name="Jakt M."/>
            <person name="Kanapin A."/>
            <person name="Katoh M."/>
            <person name="Kawasawa Y."/>
            <person name="Kelso J."/>
            <person name="Kitamura H."/>
            <person name="Kitano H."/>
            <person name="Kollias G."/>
            <person name="Krishnan S.P."/>
            <person name="Kruger A."/>
            <person name="Kummerfeld S.K."/>
            <person name="Kurochkin I.V."/>
            <person name="Lareau L.F."/>
            <person name="Lazarevic D."/>
            <person name="Lipovich L."/>
            <person name="Liu J."/>
            <person name="Liuni S."/>
            <person name="McWilliam S."/>
            <person name="Madan Babu M."/>
            <person name="Madera M."/>
            <person name="Marchionni L."/>
            <person name="Matsuda H."/>
            <person name="Matsuzawa S."/>
            <person name="Miki H."/>
            <person name="Mignone F."/>
            <person name="Miyake S."/>
            <person name="Morris K."/>
            <person name="Mottagui-Tabar S."/>
            <person name="Mulder N."/>
            <person name="Nakano N."/>
            <person name="Nakauchi H."/>
            <person name="Ng P."/>
            <person name="Nilsson R."/>
            <person name="Nishiguchi S."/>
            <person name="Nishikawa S."/>
            <person name="Nori F."/>
            <person name="Ohara O."/>
            <person name="Okazaki Y."/>
            <person name="Orlando V."/>
            <person name="Pang K.C."/>
            <person name="Pavan W.J."/>
            <person name="Pavesi G."/>
            <person name="Pesole G."/>
            <person name="Petrovsky N."/>
            <person name="Piazza S."/>
            <person name="Reed J."/>
            <person name="Reid J.F."/>
            <person name="Ring B.Z."/>
            <person name="Ringwald M."/>
            <person name="Rost B."/>
            <person name="Ruan Y."/>
            <person name="Salzberg S.L."/>
            <person name="Sandelin A."/>
            <person name="Schneider C."/>
            <person name="Schoenbach C."/>
            <person name="Sekiguchi K."/>
            <person name="Semple C.A."/>
            <person name="Seno S."/>
            <person name="Sessa L."/>
            <person name="Sheng Y."/>
            <person name="Shibata Y."/>
            <person name="Shimada H."/>
            <person name="Shimada K."/>
            <person name="Silva D."/>
            <person name="Sinclair B."/>
            <person name="Sperling S."/>
            <person name="Stupka E."/>
            <person name="Sugiura K."/>
            <person name="Sultana R."/>
            <person name="Takenaka Y."/>
            <person name="Taki K."/>
            <person name="Tammoja K."/>
            <person name="Tan S.L."/>
            <person name="Tang S."/>
            <person name="Taylor M.S."/>
            <person name="Tegner J."/>
            <person name="Teichmann S.A."/>
            <person name="Ueda H.R."/>
            <person name="van Nimwegen E."/>
            <person name="Verardo R."/>
            <person name="Wei C.L."/>
            <person name="Yagi K."/>
            <person name="Yamanishi H."/>
            <person name="Zabarovsky E."/>
            <person name="Zhu S."/>
            <person name="Zimmer A."/>
            <person name="Hide W."/>
            <person name="Bult C."/>
            <person name="Grimmond S.M."/>
            <person name="Teasdale R.D."/>
            <person name="Liu E.T."/>
            <person name="Brusic V."/>
            <person name="Quackenbush J."/>
            <person name="Wahlestedt C."/>
            <person name="Mattick J.S."/>
            <person name="Hume D.A."/>
            <person name="Kai C."/>
            <person name="Sasaki D."/>
            <person name="Tomaru Y."/>
            <person name="Fukuda S."/>
            <person name="Kanamori-Katayama M."/>
            <person name="Suzuki M."/>
            <person name="Aoki J."/>
            <person name="Arakawa T."/>
            <person name="Iida J."/>
            <person name="Imamura K."/>
            <person name="Itoh M."/>
            <person name="Kato T."/>
            <person name="Kawaji H."/>
            <person name="Kawagashira N."/>
            <person name="Kawashima T."/>
            <person name="Kojima M."/>
            <person name="Kondo S."/>
            <person name="Konno H."/>
            <person name="Nakano K."/>
            <person name="Ninomiya N."/>
            <person name="Nishio T."/>
            <person name="Okada M."/>
            <person name="Plessy C."/>
            <person name="Shibata K."/>
            <person name="Shiraki T."/>
            <person name="Suzuki S."/>
            <person name="Tagami M."/>
            <person name="Waki K."/>
            <person name="Watahiki A."/>
            <person name="Okamura-Oho Y."/>
            <person name="Suzuki H."/>
            <person name="Kawai J."/>
            <person name="Hayashizaki Y."/>
        </authorList>
    </citation>
    <scope>NUCLEOTIDE SEQUENCE [LARGE SCALE MRNA]</scope>
    <source>
        <strain>C57BL/6J</strain>
        <tissue>Brain</tissue>
    </source>
</reference>
<reference key="2">
    <citation type="journal article" date="2009" name="PLoS Biol.">
        <title>Lineage-specific biology revealed by a finished genome assembly of the mouse.</title>
        <authorList>
            <person name="Church D.M."/>
            <person name="Goodstadt L."/>
            <person name="Hillier L.W."/>
            <person name="Zody M.C."/>
            <person name="Goldstein S."/>
            <person name="She X."/>
            <person name="Bult C.J."/>
            <person name="Agarwala R."/>
            <person name="Cherry J.L."/>
            <person name="DiCuccio M."/>
            <person name="Hlavina W."/>
            <person name="Kapustin Y."/>
            <person name="Meric P."/>
            <person name="Maglott D."/>
            <person name="Birtle Z."/>
            <person name="Marques A.C."/>
            <person name="Graves T."/>
            <person name="Zhou S."/>
            <person name="Teague B."/>
            <person name="Potamousis K."/>
            <person name="Churas C."/>
            <person name="Place M."/>
            <person name="Herschleb J."/>
            <person name="Runnheim R."/>
            <person name="Forrest D."/>
            <person name="Amos-Landgraf J."/>
            <person name="Schwartz D.C."/>
            <person name="Cheng Z."/>
            <person name="Lindblad-Toh K."/>
            <person name="Eichler E.E."/>
            <person name="Ponting C.P."/>
        </authorList>
    </citation>
    <scope>NUCLEOTIDE SEQUENCE [LARGE SCALE GENOMIC DNA]</scope>
    <source>
        <strain>C57BL/6J</strain>
    </source>
</reference>
<reference key="3">
    <citation type="journal article" date="2004" name="Genome Res.">
        <title>The status, quality, and expansion of the NIH full-length cDNA project: the Mammalian Gene Collection (MGC).</title>
        <authorList>
            <consortium name="The MGC Project Team"/>
        </authorList>
    </citation>
    <scope>NUCLEOTIDE SEQUENCE [LARGE SCALE MRNA]</scope>
    <source>
        <strain>C57BL/6J</strain>
        <tissue>Brain</tissue>
    </source>
</reference>
<reference key="4">
    <citation type="journal article" date="2006" name="Mol. Cell. Proteomics">
        <title>Comprehensive identification of phosphorylation sites in postsynaptic density preparations.</title>
        <authorList>
            <person name="Trinidad J.C."/>
            <person name="Specht C.G."/>
            <person name="Thalhammer A."/>
            <person name="Schoepfer R."/>
            <person name="Burlingame A.L."/>
        </authorList>
    </citation>
    <scope>IDENTIFICATION BY MASS SPECTROMETRY [LARGE SCALE ANALYSIS]</scope>
    <source>
        <tissue>Brain</tissue>
    </source>
</reference>
<reference key="5">
    <citation type="journal article" date="2010" name="Cell">
        <title>A tissue-specific atlas of mouse protein phosphorylation and expression.</title>
        <authorList>
            <person name="Huttlin E.L."/>
            <person name="Jedrychowski M.P."/>
            <person name="Elias J.E."/>
            <person name="Goswami T."/>
            <person name="Rad R."/>
            <person name="Beausoleil S.A."/>
            <person name="Villen J."/>
            <person name="Haas W."/>
            <person name="Sowa M.E."/>
            <person name="Gygi S.P."/>
        </authorList>
    </citation>
    <scope>PHOSPHORYLATION [LARGE SCALE ANALYSIS] AT SER-310</scope>
    <scope>IDENTIFICATION BY MASS SPECTROMETRY [LARGE SCALE ANALYSIS]</scope>
    <source>
        <tissue>Brain</tissue>
    </source>
</reference>
<evidence type="ECO:0000255" key="1"/>
<evidence type="ECO:0000256" key="2">
    <source>
        <dbReference type="SAM" id="MobiDB-lite"/>
    </source>
</evidence>
<evidence type="ECO:0000305" key="3"/>
<evidence type="ECO:0007744" key="4">
    <source>
    </source>
</evidence>
<keyword id="KW-0175">Coiled coil</keyword>
<keyword id="KW-0597">Phosphoprotein</keyword>
<keyword id="KW-1185">Reference proteome</keyword>
<name>CC177_MOUSE</name>
<feature type="chain" id="PRO_0000420411" description="Coiled-coil domain-containing protein 177">
    <location>
        <begin position="1"/>
        <end position="706"/>
    </location>
</feature>
<feature type="region of interest" description="Disordered" evidence="2">
    <location>
        <begin position="1"/>
        <end position="63"/>
    </location>
</feature>
<feature type="region of interest" description="Disordered" evidence="2">
    <location>
        <begin position="179"/>
        <end position="262"/>
    </location>
</feature>
<feature type="region of interest" description="Disordered" evidence="2">
    <location>
        <begin position="268"/>
        <end position="287"/>
    </location>
</feature>
<feature type="region of interest" description="Disordered" evidence="2">
    <location>
        <begin position="364"/>
        <end position="386"/>
    </location>
</feature>
<feature type="region of interest" description="Disordered" evidence="2">
    <location>
        <begin position="398"/>
        <end position="425"/>
    </location>
</feature>
<feature type="region of interest" description="Disordered" evidence="2">
    <location>
        <begin position="448"/>
        <end position="580"/>
    </location>
</feature>
<feature type="region of interest" description="Disordered" evidence="2">
    <location>
        <begin position="651"/>
        <end position="706"/>
    </location>
</feature>
<feature type="coiled-coil region" evidence="1">
    <location>
        <begin position="360"/>
        <end position="624"/>
    </location>
</feature>
<feature type="compositionally biased region" description="Acidic residues" evidence="2">
    <location>
        <begin position="1"/>
        <end position="11"/>
    </location>
</feature>
<feature type="compositionally biased region" description="Low complexity" evidence="2">
    <location>
        <begin position="28"/>
        <end position="49"/>
    </location>
</feature>
<feature type="compositionally biased region" description="Low complexity" evidence="2">
    <location>
        <begin position="179"/>
        <end position="209"/>
    </location>
</feature>
<feature type="compositionally biased region" description="Pro residues" evidence="2">
    <location>
        <begin position="210"/>
        <end position="221"/>
    </location>
</feature>
<feature type="compositionally biased region" description="Low complexity" evidence="2">
    <location>
        <begin position="242"/>
        <end position="257"/>
    </location>
</feature>
<feature type="compositionally biased region" description="Basic and acidic residues" evidence="2">
    <location>
        <begin position="368"/>
        <end position="386"/>
    </location>
</feature>
<feature type="compositionally biased region" description="Basic and acidic residues" evidence="2">
    <location>
        <begin position="448"/>
        <end position="529"/>
    </location>
</feature>
<feature type="compositionally biased region" description="Basic and acidic residues" evidence="2">
    <location>
        <begin position="548"/>
        <end position="580"/>
    </location>
</feature>
<feature type="compositionally biased region" description="Basic and acidic residues" evidence="2">
    <location>
        <begin position="651"/>
        <end position="663"/>
    </location>
</feature>
<feature type="compositionally biased region" description="Low complexity" evidence="2">
    <location>
        <begin position="664"/>
        <end position="674"/>
    </location>
</feature>
<feature type="compositionally biased region" description="Basic and acidic residues" evidence="2">
    <location>
        <begin position="676"/>
        <end position="706"/>
    </location>
</feature>
<feature type="modified residue" description="Phosphoserine" evidence="4">
    <location>
        <position position="310"/>
    </location>
</feature>
<feature type="sequence conflict" description="In Ref. 2; AAH67044." evidence="3" ref="2">
    <original>A</original>
    <variation>S</variation>
    <location>
        <position position="346"/>
    </location>
</feature>
<proteinExistence type="evidence at protein level"/>
<protein>
    <recommendedName>
        <fullName>Coiled-coil domain-containing protein 177</fullName>
    </recommendedName>
</protein>
<sequence length="706" mass="79857">MVDPVPEEEKEGAEPGGSEGDEATASEPPDAQGAQQPAASSASASAAAPRKAEVPCGAEGGRREQSPLLHLDLFNFACPEAEGSRYVLTSPRSLEACARCAVKPVELLPRALADLVREAPGRSMRVATGLYEAYEAERLAKLQQCRAERERIMREEKRRLFTPKGPAAAPASASASASASALSGGSSSSCSSSSSLPASPASRVARRTSPSPPARSRPPPAGSRTGRKSHSLDSLSRRRDGALSSESGASSSSYSGESLRELRWPPRASARNSCPAGSASSAPNPLGRPSALALVPLTARSFSLGDLSHSPQTAQHVERIVRQVRAERGLRGVPERDRKIAALMLARHQEERLLLEQRAAAHGQWEQQRVRAEQRREREEREKQRALERGRRAWAAQVEERRGRRGREEREAARRRQQQCERSEERRRELAERQGLLRRERVERAARDDRLRKLQQEQNLKQREEGRQEGRERAELVRRERAQRAARARERQEGQLQREKRELSRAERARHEALLRGRVRQQQEEREGLRSSLEASLGRAQENYEQLQEQRARELRERARREELQGRRAKEAAERKEREHQAHLEALARAGERRLQHAAQVAEEAVQQKARRVVQTRLEKERAQRANKEKVERDEDCRRRELLQAIGRKLERSEQLSRERRSALESARSTARASFHVREKVREETNTRSFDRMVREAQLHASLDRK</sequence>
<organism>
    <name type="scientific">Mus musculus</name>
    <name type="common">Mouse</name>
    <dbReference type="NCBI Taxonomy" id="10090"/>
    <lineage>
        <taxon>Eukaryota</taxon>
        <taxon>Metazoa</taxon>
        <taxon>Chordata</taxon>
        <taxon>Craniata</taxon>
        <taxon>Vertebrata</taxon>
        <taxon>Euteleostomi</taxon>
        <taxon>Mammalia</taxon>
        <taxon>Eutheria</taxon>
        <taxon>Euarchontoglires</taxon>
        <taxon>Glires</taxon>
        <taxon>Rodentia</taxon>
        <taxon>Myomorpha</taxon>
        <taxon>Muroidea</taxon>
        <taxon>Muridae</taxon>
        <taxon>Murinae</taxon>
        <taxon>Mus</taxon>
        <taxon>Mus</taxon>
    </lineage>
</organism>
<accession>Q3UHB8</accession>
<accession>Q6NXJ5</accession>